<organism>
    <name type="scientific">Lacrimispora saccharolytica (strain ATCC 35040 / DSM 2544 / NRCC 2533 / WM1)</name>
    <name type="common">Clostridium saccharolyticum</name>
    <dbReference type="NCBI Taxonomy" id="610130"/>
    <lineage>
        <taxon>Bacteria</taxon>
        <taxon>Bacillati</taxon>
        <taxon>Bacillota</taxon>
        <taxon>Clostridia</taxon>
        <taxon>Lachnospirales</taxon>
        <taxon>Lachnospiraceae</taxon>
        <taxon>Lacrimispora</taxon>
    </lineage>
</organism>
<name>TPL_LACSW</name>
<accession>D9R201</accession>
<comment type="catalytic activity">
    <reaction evidence="1">
        <text>L-tyrosine + H2O = phenol + pyruvate + NH4(+)</text>
        <dbReference type="Rhea" id="RHEA:21704"/>
        <dbReference type="ChEBI" id="CHEBI:15361"/>
        <dbReference type="ChEBI" id="CHEBI:15377"/>
        <dbReference type="ChEBI" id="CHEBI:15882"/>
        <dbReference type="ChEBI" id="CHEBI:28938"/>
        <dbReference type="ChEBI" id="CHEBI:58315"/>
        <dbReference type="EC" id="4.1.99.2"/>
    </reaction>
</comment>
<comment type="cofactor">
    <cofactor evidence="1">
        <name>pyridoxal 5'-phosphate</name>
        <dbReference type="ChEBI" id="CHEBI:597326"/>
    </cofactor>
</comment>
<comment type="subunit">
    <text evidence="1">Homotetramer.</text>
</comment>
<comment type="similarity">
    <text evidence="1">Belongs to the beta-eliminating lyase family.</text>
</comment>
<feature type="chain" id="PRO_0000408492" description="Tyrosine phenol-lyase">
    <location>
        <begin position="1"/>
        <end position="468"/>
    </location>
</feature>
<feature type="modified residue" description="N6-(pyridoxal phosphate)lysine" evidence="1">
    <location>
        <position position="260"/>
    </location>
</feature>
<protein>
    <recommendedName>
        <fullName evidence="1">Tyrosine phenol-lyase</fullName>
        <ecNumber evidence="1">4.1.99.2</ecNumber>
    </recommendedName>
    <alternativeName>
        <fullName evidence="1">Beta-tyrosinase</fullName>
    </alternativeName>
</protein>
<reference key="1">
    <citation type="submission" date="2010-07" db="EMBL/GenBank/DDBJ databases">
        <title>Complete sequence of Clostridium saccharolyticum WM1.</title>
        <authorList>
            <consortium name="US DOE Joint Genome Institute"/>
            <person name="Lucas S."/>
            <person name="Copeland A."/>
            <person name="Lapidus A."/>
            <person name="Cheng J.-F."/>
            <person name="Bruce D."/>
            <person name="Goodwin L."/>
            <person name="Pitluck S."/>
            <person name="Chertkov O."/>
            <person name="Detter J.C."/>
            <person name="Han C."/>
            <person name="Tapia R."/>
            <person name="Land M."/>
            <person name="Hauser L."/>
            <person name="Chang Y.-J."/>
            <person name="Jeffries C."/>
            <person name="Kyrpides N."/>
            <person name="Ivanova N."/>
            <person name="Mikhailova N."/>
            <person name="Mouttaki H."/>
            <person name="Lin L."/>
            <person name="Zhou J."/>
            <person name="Hemme C.L."/>
            <person name="Woyke T."/>
        </authorList>
    </citation>
    <scope>NUCLEOTIDE SEQUENCE [LARGE SCALE GENOMIC DNA]</scope>
    <source>
        <strain>ATCC 35040 / DSM 2544 / NRCC 2533 / WM1</strain>
    </source>
</reference>
<evidence type="ECO:0000255" key="1">
    <source>
        <dbReference type="HAMAP-Rule" id="MF_00543"/>
    </source>
</evidence>
<proteinExistence type="inferred from homology"/>
<sequence length="468" mass="52639">MDMMKFAPEPFKIKMVEPMGNLNKEERKDAIRTAGYNTFLLKSEECFIDLLTDSGTNAMSDRQWAGLMLGDEAYGGSRNFYHLEETVRELFGFKYVVPTHQGRGAENILSSLTIKPGDYVPGNMYFTTTRFHQEHNGATFRDVVIDEAHDPNAILDFKGNIDLNKFQALIDEVGAERIPYICLAVTVNLAGGQPVSMANVKAVSELAHKHGIKVMFDATRCVENAYFIKTREKGYEDKSIKEIVHELFSYGDGCTMSGKKDCLTNIGGFLCMNDKDLYIRATGMVVQYEGMPTYGGMAGRDMEAMAIGLRESMEYNYISHRVNQIRYLGEKLDAAGVPMVKPSGGHAIFVDARAFLDHLDQKTDFPAQALAAAVYEFSGVRTMERGIISAGRDIKTGEDHVPKLETIRLTIPRRVYTYAHLDYVADAIIQLYQMRRDISGLKWVYEPAVLRFFTGRFEPKNGELIKGF</sequence>
<gene>
    <name evidence="1" type="primary">tpl</name>
    <name type="ordered locus">Closa_0252</name>
</gene>
<keyword id="KW-0456">Lyase</keyword>
<keyword id="KW-0663">Pyridoxal phosphate</keyword>
<dbReference type="EC" id="4.1.99.2" evidence="1"/>
<dbReference type="EMBL" id="CP002109">
    <property type="protein sequence ID" value="ADL02892.1"/>
    <property type="molecule type" value="Genomic_DNA"/>
</dbReference>
<dbReference type="RefSeq" id="WP_013270992.1">
    <property type="nucleotide sequence ID" value="NC_014376.1"/>
</dbReference>
<dbReference type="SMR" id="D9R201"/>
<dbReference type="STRING" id="610130.Closa_0252"/>
<dbReference type="PaxDb" id="610130-Closa_0252"/>
<dbReference type="KEGG" id="csh:Closa_0252"/>
<dbReference type="eggNOG" id="COG3033">
    <property type="taxonomic scope" value="Bacteria"/>
</dbReference>
<dbReference type="HOGENOM" id="CLU_047223_0_0_9"/>
<dbReference type="OrthoDB" id="9764079at2"/>
<dbReference type="Proteomes" id="UP000001662">
    <property type="component" value="Chromosome"/>
</dbReference>
<dbReference type="GO" id="GO:0050371">
    <property type="term" value="F:tyrosine phenol-lyase activity"/>
    <property type="evidence" value="ECO:0007669"/>
    <property type="project" value="UniProtKB-UniRule"/>
</dbReference>
<dbReference type="GO" id="GO:0006570">
    <property type="term" value="P:tyrosine metabolic process"/>
    <property type="evidence" value="ECO:0007669"/>
    <property type="project" value="InterPro"/>
</dbReference>
<dbReference type="CDD" id="cd00617">
    <property type="entry name" value="Tnase_like"/>
    <property type="match status" value="1"/>
</dbReference>
<dbReference type="Gene3D" id="3.90.1150.10">
    <property type="entry name" value="Aspartate Aminotransferase, domain 1"/>
    <property type="match status" value="1"/>
</dbReference>
<dbReference type="Gene3D" id="3.40.640.10">
    <property type="entry name" value="Type I PLP-dependent aspartate aminotransferase-like (Major domain)"/>
    <property type="match status" value="1"/>
</dbReference>
<dbReference type="HAMAP" id="MF_00543">
    <property type="entry name" value="Tyr_phenol_lyase"/>
    <property type="match status" value="1"/>
</dbReference>
<dbReference type="InterPro" id="IPR001597">
    <property type="entry name" value="ArAA_b-elim_lyase/Thr_aldolase"/>
</dbReference>
<dbReference type="InterPro" id="IPR011166">
    <property type="entry name" value="Beta-eliminating_lyase"/>
</dbReference>
<dbReference type="InterPro" id="IPR015424">
    <property type="entry name" value="PyrdxlP-dep_Trfase"/>
</dbReference>
<dbReference type="InterPro" id="IPR015421">
    <property type="entry name" value="PyrdxlP-dep_Trfase_major"/>
</dbReference>
<dbReference type="InterPro" id="IPR015422">
    <property type="entry name" value="PyrdxlP-dep_Trfase_small"/>
</dbReference>
<dbReference type="InterPro" id="IPR013441">
    <property type="entry name" value="Tyr_phenol_ly"/>
</dbReference>
<dbReference type="NCBIfam" id="NF009709">
    <property type="entry name" value="PRK13238.1"/>
    <property type="match status" value="1"/>
</dbReference>
<dbReference type="NCBIfam" id="TIGR02618">
    <property type="entry name" value="tyr_phenol_ly"/>
    <property type="match status" value="1"/>
</dbReference>
<dbReference type="PANTHER" id="PTHR32325">
    <property type="entry name" value="BETA-ELIMINATING LYASE-LIKE PROTEIN-RELATED"/>
    <property type="match status" value="1"/>
</dbReference>
<dbReference type="PANTHER" id="PTHR32325:SF4">
    <property type="entry name" value="TRYPTOPHANASE"/>
    <property type="match status" value="1"/>
</dbReference>
<dbReference type="Pfam" id="PF01212">
    <property type="entry name" value="Beta_elim_lyase"/>
    <property type="match status" value="1"/>
</dbReference>
<dbReference type="PIRSF" id="PIRSF001386">
    <property type="entry name" value="Trpase"/>
    <property type="match status" value="1"/>
</dbReference>
<dbReference type="SUPFAM" id="SSF53383">
    <property type="entry name" value="PLP-dependent transferases"/>
    <property type="match status" value="1"/>
</dbReference>